<protein>
    <recommendedName>
        <fullName evidence="1">GTP cyclohydrolase FolE2</fullName>
        <ecNumber evidence="1">3.5.4.16</ecNumber>
    </recommendedName>
</protein>
<sequence>MIDVQSQKDQRGISIQKVGIKDLNWPIVVMDRENKTQTTIAKIIAAAELKGDIRGTHMSRFIEAIDELKVVGPKEIEKLLDRIKEKLNSEKAYIRFDFPYFINKRTPVTATLSPLKVDCYFEAEKDQKFDLKVGVIVPVHTLCPCSKEISEYGAHNQRAYVTIEVRMKKFMWIEELVEIAEASASCPLYSILKRPDEKWVTERAYQNPRFVEDLLREVVLKMKEDGRIKWYKVFVESIESIHNHNAFAYIEGEITK</sequence>
<proteinExistence type="inferred from homology"/>
<keyword id="KW-0378">Hydrolase</keyword>
<accession>B9MNP4</accession>
<comment type="function">
    <text evidence="1">Converts GTP to 7,8-dihydroneopterin triphosphate.</text>
</comment>
<comment type="catalytic activity">
    <reaction evidence="1">
        <text>GTP + H2O = 7,8-dihydroneopterin 3'-triphosphate + formate + H(+)</text>
        <dbReference type="Rhea" id="RHEA:17473"/>
        <dbReference type="ChEBI" id="CHEBI:15377"/>
        <dbReference type="ChEBI" id="CHEBI:15378"/>
        <dbReference type="ChEBI" id="CHEBI:15740"/>
        <dbReference type="ChEBI" id="CHEBI:37565"/>
        <dbReference type="ChEBI" id="CHEBI:58462"/>
        <dbReference type="EC" id="3.5.4.16"/>
    </reaction>
</comment>
<comment type="pathway">
    <text evidence="1">Cofactor biosynthesis; 7,8-dihydroneopterin triphosphate biosynthesis; 7,8-dihydroneopterin triphosphate from GTP: step 1/1.</text>
</comment>
<comment type="similarity">
    <text evidence="1">Belongs to the GTP cyclohydrolase IV family.</text>
</comment>
<organism>
    <name type="scientific">Caldicellulosiruptor bescii (strain ATCC BAA-1888 / DSM 6725 / KCTC 15123 / Z-1320)</name>
    <name type="common">Anaerocellum thermophilum</name>
    <dbReference type="NCBI Taxonomy" id="521460"/>
    <lineage>
        <taxon>Bacteria</taxon>
        <taxon>Bacillati</taxon>
        <taxon>Bacillota</taxon>
        <taxon>Bacillota incertae sedis</taxon>
        <taxon>Caldicellulosiruptorales</taxon>
        <taxon>Caldicellulosiruptoraceae</taxon>
        <taxon>Caldicellulosiruptor</taxon>
    </lineage>
</organism>
<dbReference type="EC" id="3.5.4.16" evidence="1"/>
<dbReference type="EMBL" id="CP001393">
    <property type="protein sequence ID" value="ACM59573.1"/>
    <property type="molecule type" value="Genomic_DNA"/>
</dbReference>
<dbReference type="RefSeq" id="WP_015907036.1">
    <property type="nucleotide sequence ID" value="NC_012034.1"/>
</dbReference>
<dbReference type="SMR" id="B9MNP4"/>
<dbReference type="STRING" id="521460.Athe_0441"/>
<dbReference type="GeneID" id="31771799"/>
<dbReference type="KEGG" id="ate:Athe_0441"/>
<dbReference type="eggNOG" id="COG1469">
    <property type="taxonomic scope" value="Bacteria"/>
</dbReference>
<dbReference type="HOGENOM" id="CLU_062816_1_1_9"/>
<dbReference type="UniPathway" id="UPA00848">
    <property type="reaction ID" value="UER00151"/>
</dbReference>
<dbReference type="Proteomes" id="UP000007723">
    <property type="component" value="Chromosome"/>
</dbReference>
<dbReference type="GO" id="GO:0003934">
    <property type="term" value="F:GTP cyclohydrolase I activity"/>
    <property type="evidence" value="ECO:0007669"/>
    <property type="project" value="UniProtKB-UniRule"/>
</dbReference>
<dbReference type="GO" id="GO:0046654">
    <property type="term" value="P:tetrahydrofolate biosynthetic process"/>
    <property type="evidence" value="ECO:0007669"/>
    <property type="project" value="UniProtKB-UniRule"/>
</dbReference>
<dbReference type="Gene3D" id="3.10.270.10">
    <property type="entry name" value="Urate Oxidase"/>
    <property type="match status" value="1"/>
</dbReference>
<dbReference type="HAMAP" id="MF_01527_B">
    <property type="entry name" value="GTP_cyclohydrol_B"/>
    <property type="match status" value="1"/>
</dbReference>
<dbReference type="InterPro" id="IPR022838">
    <property type="entry name" value="GTP_cyclohydrolase_FolE2"/>
</dbReference>
<dbReference type="InterPro" id="IPR003801">
    <property type="entry name" value="GTP_cyclohydrolase_FolE2/MptA"/>
</dbReference>
<dbReference type="NCBIfam" id="NF010200">
    <property type="entry name" value="PRK13674.1-1"/>
    <property type="match status" value="1"/>
</dbReference>
<dbReference type="PANTHER" id="PTHR36445">
    <property type="entry name" value="GTP CYCLOHYDROLASE MPTA"/>
    <property type="match status" value="1"/>
</dbReference>
<dbReference type="PANTHER" id="PTHR36445:SF1">
    <property type="entry name" value="GTP CYCLOHYDROLASE MPTA"/>
    <property type="match status" value="1"/>
</dbReference>
<dbReference type="Pfam" id="PF02649">
    <property type="entry name" value="GCHY-1"/>
    <property type="match status" value="1"/>
</dbReference>
<evidence type="ECO:0000255" key="1">
    <source>
        <dbReference type="HAMAP-Rule" id="MF_01527"/>
    </source>
</evidence>
<gene>
    <name evidence="1" type="primary">folE2</name>
    <name type="ordered locus">Athe_0441</name>
</gene>
<feature type="chain" id="PRO_1000185150" description="GTP cyclohydrolase FolE2">
    <location>
        <begin position="1"/>
        <end position="256"/>
    </location>
</feature>
<feature type="site" description="May be catalytically important" evidence="1">
    <location>
        <position position="143"/>
    </location>
</feature>
<name>GCH4_CALBD</name>
<reference key="1">
    <citation type="submission" date="2009-01" db="EMBL/GenBank/DDBJ databases">
        <title>Complete sequence of chromosome of Caldicellulosiruptor becscii DSM 6725.</title>
        <authorList>
            <person name="Lucas S."/>
            <person name="Copeland A."/>
            <person name="Lapidus A."/>
            <person name="Glavina del Rio T."/>
            <person name="Tice H."/>
            <person name="Bruce D."/>
            <person name="Goodwin L."/>
            <person name="Pitluck S."/>
            <person name="Sims D."/>
            <person name="Meincke L."/>
            <person name="Brettin T."/>
            <person name="Detter J.C."/>
            <person name="Han C."/>
            <person name="Larimer F."/>
            <person name="Land M."/>
            <person name="Hauser L."/>
            <person name="Kyrpides N."/>
            <person name="Ovchinnikova G."/>
            <person name="Kataeva I."/>
            <person name="Adams M.W.W."/>
        </authorList>
    </citation>
    <scope>NUCLEOTIDE SEQUENCE [LARGE SCALE GENOMIC DNA]</scope>
    <source>
        <strain>ATCC BAA-1888 / DSM 6725 / KCTC 15123 / Z-1320</strain>
    </source>
</reference>